<name>TAX_HTL1L</name>
<keyword id="KW-1074">Activation of host NF-kappa-B by virus</keyword>
<keyword id="KW-0010">Activator</keyword>
<keyword id="KW-0238">DNA-binding</keyword>
<keyword id="KW-1077">G0/G1 host cell cycle checkpoint dysregulation by virus</keyword>
<keyword id="KW-1078">G1/S host cell cycle checkpoint dysregulation by virus</keyword>
<keyword id="KW-1035">Host cytoplasm</keyword>
<keyword id="KW-1048">Host nucleus</keyword>
<keyword id="KW-0945">Host-virus interaction</keyword>
<keyword id="KW-1098">Inhibition of host mitotic exit by virus</keyword>
<keyword id="KW-0479">Metal-binding</keyword>
<keyword id="KW-1121">Modulation of host cell cycle by virus</keyword>
<keyword id="KW-0553">Oncogene</keyword>
<keyword id="KW-0597">Phosphoprotein</keyword>
<keyword id="KW-0729">SH3-binding</keyword>
<keyword id="KW-0804">Transcription</keyword>
<keyword id="KW-0805">Transcription regulation</keyword>
<keyword id="KW-0862">Zinc</keyword>
<keyword id="KW-0863">Zinc-finger</keyword>
<sequence length="352" mass="39149">MAHFPGFGQSLLYGYPVYVFGDCVQGDWCPISGGLCSARLHRHALLATCPEHQITDPIDGRVIGSALQFLIPRLPSFPTQRTSKTLKVLTPPTTHTTPNIPPSFFQAVRQHSPFRNGCMEPTLGQQLPSLSFPDPGLRPQNLYTLWGSSVVCMYLYQLSPPITWPLLPQVIFCHPGQLGAFLTNVPYKRMEELLYKIFLNTGALIILPEGCLPTTLFQPIRAPATLTAWQNGLLPFQSTLTTPGLIWTFSDGTPMISGPCPKDGQPSLVLQSSSFIFHKFQTKAYHPSVLLSHGLIQYSSFHSLHLPFEEYTNIPISLLFNKREADDTDYGPRIPPGGLEPPSEKHFHETEV</sequence>
<accession>P0C222</accession>
<organism>
    <name type="scientific">Human T-cell leukemia virus 1 (isolate Melanesia mel5 subtype C)</name>
    <name type="common">HTLV-1</name>
    <dbReference type="NCBI Taxonomy" id="402046"/>
    <lineage>
        <taxon>Viruses</taxon>
        <taxon>Riboviria</taxon>
        <taxon>Pararnavirae</taxon>
        <taxon>Artverviricota</taxon>
        <taxon>Revtraviricetes</taxon>
        <taxon>Ortervirales</taxon>
        <taxon>Retroviridae</taxon>
        <taxon>Orthoretrovirinae</taxon>
        <taxon>Deltaretrovirus</taxon>
        <taxon>Primate T-lymphotropic virus 1</taxon>
    </lineage>
</organism>
<protein>
    <recommendedName>
        <fullName>Protein Tax-1</fullName>
    </recommendedName>
    <alternativeName>
        <fullName>Protein X-LOR</fullName>
    </alternativeName>
    <alternativeName>
        <fullName>Trans-activating transcriptional regulatory protein of HTLV-1</fullName>
    </alternativeName>
</protein>
<gene>
    <name type="primary">tax</name>
</gene>
<evidence type="ECO:0000250" key="1"/>
<evidence type="ECO:0000250" key="2">
    <source>
        <dbReference type="UniProtKB" id="P03409"/>
    </source>
</evidence>
<evidence type="ECO:0000255" key="3"/>
<evidence type="ECO:0000256" key="4">
    <source>
        <dbReference type="SAM" id="MobiDB-lite"/>
    </source>
</evidence>
<evidence type="ECO:0000305" key="5"/>
<comment type="function">
    <text evidence="2">Transcriptional activator that governs the viral transcription from the 5'LTR via the recruitment of dimers of host phosphorylated CREB1. Together they bind cAMP response elements within the viral promoter and mediate high-level viral transcription. Increases host CREB1 O-GlcNAcylation to further increase 5'LTR transactivation. Also modulates the expression of cellular genes leading to the deregulation of T-cell proliferation, perturbing the integrity of cell cycle checkpoints, the DNA damage response and apopototic pathways. Acts as an ubiquitin E3 ligase and stimulates host IKK complex by catalyzing the assembly of free mixed-linkage polyubiquitin chains, resulting in constitutive activation of the transcription factor NF-kappa-B. Inhibits the host nonsense-mediated mRNA decay (NMD), a cellular process that can actively degrade mRNAs by interacting with host UPF1.</text>
</comment>
<comment type="subunit">
    <text evidence="2">Homodimer. Interacts with host CREB1. Interacts with host DLG1, IKBKG, KDM4A, MAGII3 and TAX1BP1. Recruits the coactivators CREBBP, EP300 and PCAF. Interaction with human CARM1 enhances Tax transactivation and promotes methylation of histone H3. Interacts with host SUV39H1 protein, leading to abrogate Tax transactivation of HTLV-1 LTR. Interaction with human CREB coactivators, CRTC1/TORC1, CRTC2/TORC2 and CRTC3/TORC3 enhances Tax transactivation. Interacts with host UPF1; this interaction inhibits the host nonsense-mediated mRNA decay (NMD). Interacts (via N-terminus) with host PLSCR1; this interaction negatively regulates Tax transactivation activity by altering its subcellular distribution and homodimerization.</text>
</comment>
<comment type="interaction">
    <interactant intactId="EBI-11794384">
        <id>P0C222</id>
    </interactant>
    <interactant intactId="EBI-357345">
        <id>Q14160</id>
        <label>SCRIB</label>
    </interactant>
    <organismsDiffer>true</organismsDiffer>
    <experiments>2</experiments>
</comment>
<comment type="subcellular location">
    <subcellularLocation>
        <location evidence="2">Host nucleus</location>
    </subcellularLocation>
    <subcellularLocation>
        <location evidence="2">Host cytoplasm</location>
    </subcellularLocation>
    <text evidence="2">Shuttles from the host nucleus to the cytoplasm. Found predominantly in the nucleus, where it is equally distributed between the nucleoplasm and the nuclear matrix.</text>
</comment>
<comment type="induction">
    <text>Down-regulated by P30II.</text>
</comment>
<comment type="domain">
    <text evidence="1">The 48 N-terminal residues contain a non-canonical functional nuclear localization signal (NLS).</text>
</comment>
<comment type="domain">
    <text evidence="1">The PDZ-binding domain mediates binding to human DLG1 and MAGI3. Interaction with other PDZ domain-containing protein induces IL2-independent growth (By similarity).</text>
</comment>
<comment type="PTM">
    <text evidence="1">Phosphorylation at Thr-48 results in the loss of NF-kappa-B activation function. Phosphorylation at Thr-215 results in loss of CREB and NF-B responsive promoters activation. Phosphorylation at Thr-183 has no effect on these Tax functions. Thr-48, Thr-183 and Thr-214 are highly phosphorylated, whereas Ser-300 is only rarely phosphorylated (By similarity).</text>
</comment>
<comment type="miscellaneous">
    <text>HTLV-1 lineages are divided in four clades, A (Cosmopolitan), B (Central African group), C (Melanesian group) and D (New Central African group).</text>
</comment>
<comment type="similarity">
    <text evidence="5">Belongs to the deltaretrovirus Tax protein family.</text>
</comment>
<proteinExistence type="evidence at protein level"/>
<reference key="1">
    <citation type="journal article" date="1993" name="J. Virol.">
        <title>Complete nucleotide sequence of a highly divergent human T-cell leukemia (lymphotropic) virus type I (HTLV-I) variant from melanesia: genetic and phylogenetic relationship to HTLV-I strains from other geographical regions.</title>
        <authorList>
            <person name="Gessain A."/>
            <person name="Boeri E."/>
            <person name="Yanagihara R."/>
            <person name="Gallo R.C."/>
            <person name="Franchini G."/>
        </authorList>
    </citation>
    <scope>NUCLEOTIDE SEQUENCE [GENOMIC DNA]</scope>
</reference>
<reference key="2">
    <citation type="journal article" date="2005" name="Oncogene">
        <title>Molecular mechanisms of cellular transformation by HTLV-1 Tax.</title>
        <authorList>
            <person name="Grassmann R."/>
            <person name="Aboud M."/>
            <person name="Jeang K.T."/>
        </authorList>
    </citation>
    <scope>REVIEW</scope>
</reference>
<reference key="3">
    <citation type="journal article" date="2005" name="Oncogene">
        <title>Transcriptional and post-transcriptional gene regulation of HTLV-1.</title>
        <authorList>
            <person name="Kashanchi F."/>
            <person name="Brady J.N."/>
        </authorList>
    </citation>
    <scope>REVIEW</scope>
</reference>
<organismHost>
    <name type="scientific">Homo sapiens</name>
    <name type="common">Human</name>
    <dbReference type="NCBI Taxonomy" id="9606"/>
</organismHost>
<dbReference type="EMBL" id="L02534">
    <property type="status" value="NOT_ANNOTATED_CDS"/>
    <property type="molecule type" value="Genomic_DNA"/>
</dbReference>
<dbReference type="IntAct" id="P0C222">
    <property type="interactions" value="1"/>
</dbReference>
<dbReference type="MINT" id="P0C222"/>
<dbReference type="GO" id="GO:0030430">
    <property type="term" value="C:host cell cytoplasm"/>
    <property type="evidence" value="ECO:0007669"/>
    <property type="project" value="UniProtKB-SubCell"/>
</dbReference>
<dbReference type="GO" id="GO:0042025">
    <property type="term" value="C:host cell nucleus"/>
    <property type="evidence" value="ECO:0007669"/>
    <property type="project" value="UniProtKB-SubCell"/>
</dbReference>
<dbReference type="GO" id="GO:0003677">
    <property type="term" value="F:DNA binding"/>
    <property type="evidence" value="ECO:0007669"/>
    <property type="project" value="UniProtKB-KW"/>
</dbReference>
<dbReference type="GO" id="GO:0017124">
    <property type="term" value="F:SH3 domain binding"/>
    <property type="evidence" value="ECO:0007669"/>
    <property type="project" value="UniProtKB-KW"/>
</dbReference>
<dbReference type="GO" id="GO:0008270">
    <property type="term" value="F:zinc ion binding"/>
    <property type="evidence" value="ECO:0007669"/>
    <property type="project" value="UniProtKB-KW"/>
</dbReference>
<dbReference type="GO" id="GO:0045893">
    <property type="term" value="P:positive regulation of DNA-templated transcription"/>
    <property type="evidence" value="ECO:0007669"/>
    <property type="project" value="InterPro"/>
</dbReference>
<dbReference type="GO" id="GO:0085033">
    <property type="term" value="P:symbiont-mediated activation of host NF-kappaB cascade"/>
    <property type="evidence" value="ECO:0007669"/>
    <property type="project" value="UniProtKB-KW"/>
</dbReference>
<dbReference type="GO" id="GO:0039646">
    <property type="term" value="P:symbiont-mediated perturbation of host cell cycle G0/G1 transition checkpoint"/>
    <property type="evidence" value="ECO:0007669"/>
    <property type="project" value="UniProtKB-KW"/>
</dbReference>
<dbReference type="GO" id="GO:0039645">
    <property type="term" value="P:symbiont-mediated perturbation of host cell cycle G1/S transition checkpoint"/>
    <property type="evidence" value="ECO:0007669"/>
    <property type="project" value="UniProtKB-KW"/>
</dbReference>
<dbReference type="GO" id="GO:0039593">
    <property type="term" value="P:symbiont-mediated perturbation of host exit from mitosis"/>
    <property type="evidence" value="ECO:0007669"/>
    <property type="project" value="UniProtKB-KW"/>
</dbReference>
<dbReference type="InterPro" id="IPR004120">
    <property type="entry name" value="Tax"/>
</dbReference>
<dbReference type="Pfam" id="PF02959">
    <property type="entry name" value="Tax"/>
    <property type="match status" value="1"/>
</dbReference>
<feature type="chain" id="PRO_0000260489" description="Protein Tax-1">
    <location>
        <begin position="1"/>
        <end position="352"/>
    </location>
</feature>
<feature type="zinc finger region" evidence="3">
    <location>
        <begin position="23"/>
        <end position="49"/>
    </location>
</feature>
<feature type="region of interest" description="Interaction with CREB1" evidence="1">
    <location>
        <begin position="2"/>
        <end position="57"/>
    </location>
</feature>
<feature type="region of interest" description="Interaction with CREBBP/P300" evidence="1">
    <location>
        <begin position="80"/>
        <end position="94"/>
    </location>
</feature>
<feature type="region of interest" description="Interaction with IKBKG" evidence="1">
    <location>
        <begin position="105"/>
        <end position="110"/>
    </location>
</feature>
<feature type="region of interest" description="Homodimerization" evidence="1">
    <location>
        <begin position="115"/>
        <end position="144"/>
    </location>
</feature>
<feature type="region of interest" description="Homodimerization" evidence="1">
    <location>
        <begin position="212"/>
        <end position="247"/>
    </location>
</feature>
<feature type="region of interest" description="Transactivation" evidence="1">
    <location>
        <begin position="288"/>
        <end position="321"/>
    </location>
</feature>
<feature type="region of interest" description="Interaction with CREBBP C-terminus" evidence="1">
    <location>
        <begin position="311"/>
        <end position="318"/>
    </location>
</feature>
<feature type="region of interest" description="Disordered" evidence="4">
    <location>
        <begin position="327"/>
        <end position="352"/>
    </location>
</feature>
<feature type="short sequence motif" description="SH3-binding" evidence="3">
    <location>
        <begin position="72"/>
        <end position="79"/>
    </location>
</feature>
<feature type="short sequence motif" description="Nuclear export signal" evidence="1">
    <location>
        <begin position="187"/>
        <end position="201"/>
    </location>
</feature>
<feature type="short sequence motif" description="PDZ-binding" evidence="1">
    <location>
        <begin position="349"/>
        <end position="352"/>
    </location>
</feature>
<feature type="compositionally biased region" description="Basic and acidic residues" evidence="4">
    <location>
        <begin position="342"/>
        <end position="352"/>
    </location>
</feature>
<feature type="modified residue" description="Phosphothreonine; by host" evidence="1">
    <location>
        <position position="48"/>
    </location>
</feature>
<feature type="modified residue" description="Phosphothreonine; by host" evidence="1">
    <location>
        <position position="183"/>
    </location>
</feature>
<feature type="modified residue" description="Phosphothreonine; by host" evidence="1">
    <location>
        <position position="214"/>
    </location>
</feature>
<feature type="modified residue" description="Phosphoserine; by host" evidence="1">
    <location>
        <position position="299"/>
    </location>
</feature>
<feature type="modified residue" description="Phosphoserine; by host" evidence="1">
    <location>
        <position position="300"/>
    </location>
</feature>